<evidence type="ECO:0000255" key="1">
    <source>
        <dbReference type="HAMAP-Rule" id="MF_01151"/>
    </source>
</evidence>
<evidence type="ECO:0000256" key="2">
    <source>
        <dbReference type="SAM" id="MobiDB-lite"/>
    </source>
</evidence>
<proteinExistence type="inferred from homology"/>
<name>GRPE_PSESM</name>
<dbReference type="EMBL" id="AE016853">
    <property type="protein sequence ID" value="AAO57954.1"/>
    <property type="molecule type" value="Genomic_DNA"/>
</dbReference>
<dbReference type="RefSeq" id="NP_794259.1">
    <property type="nucleotide sequence ID" value="NC_004578.1"/>
</dbReference>
<dbReference type="RefSeq" id="WP_003377479.1">
    <property type="nucleotide sequence ID" value="NC_004578.1"/>
</dbReference>
<dbReference type="SMR" id="Q87WN9"/>
<dbReference type="STRING" id="223283.PSPTO_4506"/>
<dbReference type="GeneID" id="1186189"/>
<dbReference type="KEGG" id="pst:PSPTO_4506"/>
<dbReference type="PATRIC" id="fig|223283.9.peg.4622"/>
<dbReference type="eggNOG" id="COG0576">
    <property type="taxonomic scope" value="Bacteria"/>
</dbReference>
<dbReference type="HOGENOM" id="CLU_057217_6_0_6"/>
<dbReference type="OrthoDB" id="9789811at2"/>
<dbReference type="PhylomeDB" id="Q87WN9"/>
<dbReference type="Proteomes" id="UP000002515">
    <property type="component" value="Chromosome"/>
</dbReference>
<dbReference type="GO" id="GO:0005829">
    <property type="term" value="C:cytosol"/>
    <property type="evidence" value="ECO:0007669"/>
    <property type="project" value="TreeGrafter"/>
</dbReference>
<dbReference type="GO" id="GO:0000774">
    <property type="term" value="F:adenyl-nucleotide exchange factor activity"/>
    <property type="evidence" value="ECO:0007669"/>
    <property type="project" value="InterPro"/>
</dbReference>
<dbReference type="GO" id="GO:0042803">
    <property type="term" value="F:protein homodimerization activity"/>
    <property type="evidence" value="ECO:0007669"/>
    <property type="project" value="InterPro"/>
</dbReference>
<dbReference type="GO" id="GO:0051087">
    <property type="term" value="F:protein-folding chaperone binding"/>
    <property type="evidence" value="ECO:0007669"/>
    <property type="project" value="InterPro"/>
</dbReference>
<dbReference type="GO" id="GO:0051082">
    <property type="term" value="F:unfolded protein binding"/>
    <property type="evidence" value="ECO:0007669"/>
    <property type="project" value="TreeGrafter"/>
</dbReference>
<dbReference type="GO" id="GO:0006457">
    <property type="term" value="P:protein folding"/>
    <property type="evidence" value="ECO:0007669"/>
    <property type="project" value="InterPro"/>
</dbReference>
<dbReference type="CDD" id="cd00446">
    <property type="entry name" value="GrpE"/>
    <property type="match status" value="1"/>
</dbReference>
<dbReference type="FunFam" id="2.30.22.10:FF:000001">
    <property type="entry name" value="Protein GrpE"/>
    <property type="match status" value="1"/>
</dbReference>
<dbReference type="Gene3D" id="3.90.20.20">
    <property type="match status" value="1"/>
</dbReference>
<dbReference type="Gene3D" id="2.30.22.10">
    <property type="entry name" value="Head domain of nucleotide exchange factor GrpE"/>
    <property type="match status" value="1"/>
</dbReference>
<dbReference type="HAMAP" id="MF_01151">
    <property type="entry name" value="GrpE"/>
    <property type="match status" value="1"/>
</dbReference>
<dbReference type="InterPro" id="IPR000740">
    <property type="entry name" value="GrpE"/>
</dbReference>
<dbReference type="InterPro" id="IPR013805">
    <property type="entry name" value="GrpE_coiled_coil"/>
</dbReference>
<dbReference type="InterPro" id="IPR009012">
    <property type="entry name" value="GrpE_head"/>
</dbReference>
<dbReference type="NCBIfam" id="NF010737">
    <property type="entry name" value="PRK14139.1"/>
    <property type="match status" value="1"/>
</dbReference>
<dbReference type="NCBIfam" id="NF010738">
    <property type="entry name" value="PRK14140.1"/>
    <property type="match status" value="1"/>
</dbReference>
<dbReference type="NCBIfam" id="NF010748">
    <property type="entry name" value="PRK14150.1"/>
    <property type="match status" value="1"/>
</dbReference>
<dbReference type="NCBIfam" id="NF010749">
    <property type="entry name" value="PRK14151.1"/>
    <property type="match status" value="1"/>
</dbReference>
<dbReference type="PANTHER" id="PTHR21237">
    <property type="entry name" value="GRPE PROTEIN"/>
    <property type="match status" value="1"/>
</dbReference>
<dbReference type="PANTHER" id="PTHR21237:SF23">
    <property type="entry name" value="GRPE PROTEIN HOMOLOG, MITOCHONDRIAL"/>
    <property type="match status" value="1"/>
</dbReference>
<dbReference type="Pfam" id="PF01025">
    <property type="entry name" value="GrpE"/>
    <property type="match status" value="1"/>
</dbReference>
<dbReference type="PRINTS" id="PR00773">
    <property type="entry name" value="GRPEPROTEIN"/>
</dbReference>
<dbReference type="SUPFAM" id="SSF58014">
    <property type="entry name" value="Coiled-coil domain of nucleotide exchange factor GrpE"/>
    <property type="match status" value="1"/>
</dbReference>
<dbReference type="SUPFAM" id="SSF51064">
    <property type="entry name" value="Head domain of nucleotide exchange factor GrpE"/>
    <property type="match status" value="1"/>
</dbReference>
<dbReference type="PROSITE" id="PS01071">
    <property type="entry name" value="GRPE"/>
    <property type="match status" value="1"/>
</dbReference>
<reference key="1">
    <citation type="journal article" date="2003" name="Proc. Natl. Acad. Sci. U.S.A.">
        <title>The complete genome sequence of the Arabidopsis and tomato pathogen Pseudomonas syringae pv. tomato DC3000.</title>
        <authorList>
            <person name="Buell C.R."/>
            <person name="Joardar V."/>
            <person name="Lindeberg M."/>
            <person name="Selengut J."/>
            <person name="Paulsen I.T."/>
            <person name="Gwinn M.L."/>
            <person name="Dodson R.J."/>
            <person name="DeBoy R.T."/>
            <person name="Durkin A.S."/>
            <person name="Kolonay J.F."/>
            <person name="Madupu R."/>
            <person name="Daugherty S.C."/>
            <person name="Brinkac L.M."/>
            <person name="Beanan M.J."/>
            <person name="Haft D.H."/>
            <person name="Nelson W.C."/>
            <person name="Davidsen T.M."/>
            <person name="Zafar N."/>
            <person name="Zhou L."/>
            <person name="Liu J."/>
            <person name="Yuan Q."/>
            <person name="Khouri H.M."/>
            <person name="Fedorova N.B."/>
            <person name="Tran B."/>
            <person name="Russell D."/>
            <person name="Berry K.J."/>
            <person name="Utterback T.R."/>
            <person name="Van Aken S.E."/>
            <person name="Feldblyum T.V."/>
            <person name="D'Ascenzo M."/>
            <person name="Deng W.-L."/>
            <person name="Ramos A.R."/>
            <person name="Alfano J.R."/>
            <person name="Cartinhour S."/>
            <person name="Chatterjee A.K."/>
            <person name="Delaney T.P."/>
            <person name="Lazarowitz S.G."/>
            <person name="Martin G.B."/>
            <person name="Schneider D.J."/>
            <person name="Tang X."/>
            <person name="Bender C.L."/>
            <person name="White O."/>
            <person name="Fraser C.M."/>
            <person name="Collmer A."/>
        </authorList>
    </citation>
    <scope>NUCLEOTIDE SEQUENCE [LARGE SCALE GENOMIC DNA]</scope>
    <source>
        <strain>ATCC BAA-871 / DC3000</strain>
    </source>
</reference>
<protein>
    <recommendedName>
        <fullName evidence="1">Protein GrpE</fullName>
    </recommendedName>
    <alternativeName>
        <fullName evidence="1">HSP-70 cofactor</fullName>
    </alternativeName>
</protein>
<organism>
    <name type="scientific">Pseudomonas syringae pv. tomato (strain ATCC BAA-871 / DC3000)</name>
    <dbReference type="NCBI Taxonomy" id="223283"/>
    <lineage>
        <taxon>Bacteria</taxon>
        <taxon>Pseudomonadati</taxon>
        <taxon>Pseudomonadota</taxon>
        <taxon>Gammaproteobacteria</taxon>
        <taxon>Pseudomonadales</taxon>
        <taxon>Pseudomonadaceae</taxon>
        <taxon>Pseudomonas</taxon>
    </lineage>
</organism>
<sequence>MADEQNLDAQAQDQAAEAGAGDELTTRVQVLEEQLAAAQDQSLRVAADLQNVRRRAEQDVEKAHKFALEKFAGDLLPIIDSLERGLDLSNPDDESIRPMREGIELTLKMFQDTLKRYQLEAIDPHGQPFSADQHQAMAMQESADVEPNTVLKVFQKGYQLNGRLLRPAMVVVSKAPSPATPSINEQA</sequence>
<comment type="function">
    <text evidence="1">Participates actively in the response to hyperosmotic and heat shock by preventing the aggregation of stress-denatured proteins, in association with DnaK and GrpE. It is the nucleotide exchange factor for DnaK and may function as a thermosensor. Unfolded proteins bind initially to DnaJ; upon interaction with the DnaJ-bound protein, DnaK hydrolyzes its bound ATP, resulting in the formation of a stable complex. GrpE releases ADP from DnaK; ATP binding to DnaK triggers the release of the substrate protein, thus completing the reaction cycle. Several rounds of ATP-dependent interactions between DnaJ, DnaK and GrpE are required for fully efficient folding.</text>
</comment>
<comment type="subunit">
    <text evidence="1">Homodimer.</text>
</comment>
<comment type="subcellular location">
    <subcellularLocation>
        <location evidence="1">Cytoplasm</location>
    </subcellularLocation>
</comment>
<comment type="similarity">
    <text evidence="1">Belongs to the GrpE family.</text>
</comment>
<feature type="chain" id="PRO_0000113841" description="Protein GrpE">
    <location>
        <begin position="1"/>
        <end position="187"/>
    </location>
</feature>
<feature type="region of interest" description="Disordered" evidence="2">
    <location>
        <begin position="1"/>
        <end position="22"/>
    </location>
</feature>
<feature type="compositionally biased region" description="Low complexity" evidence="2">
    <location>
        <begin position="7"/>
        <end position="22"/>
    </location>
</feature>
<accession>Q87WN9</accession>
<keyword id="KW-0143">Chaperone</keyword>
<keyword id="KW-0963">Cytoplasm</keyword>
<keyword id="KW-1185">Reference proteome</keyword>
<keyword id="KW-0346">Stress response</keyword>
<gene>
    <name evidence="1" type="primary">grpE</name>
    <name type="ordered locus">PSPTO_4506</name>
</gene>